<name>RFCS_METST</name>
<comment type="function">
    <text evidence="1">Part of the RFC clamp loader complex which loads the PCNA sliding clamp onto DNA.</text>
</comment>
<comment type="subunit">
    <text evidence="1">Heteromultimer composed of small subunits (RfcS) and large subunits (RfcL).</text>
</comment>
<comment type="similarity">
    <text evidence="1">Belongs to the activator 1 small subunits family. RfcS subfamily.</text>
</comment>
<organism>
    <name type="scientific">Methanosphaera stadtmanae (strain ATCC 43021 / DSM 3091 / JCM 11832 / MCB-3)</name>
    <dbReference type="NCBI Taxonomy" id="339860"/>
    <lineage>
        <taxon>Archaea</taxon>
        <taxon>Methanobacteriati</taxon>
        <taxon>Methanobacteriota</taxon>
        <taxon>Methanomada group</taxon>
        <taxon>Methanobacteria</taxon>
        <taxon>Methanobacteriales</taxon>
        <taxon>Methanobacteriaceae</taxon>
        <taxon>Methanosphaera</taxon>
    </lineage>
</organism>
<protein>
    <recommendedName>
        <fullName evidence="1">Replication factor C small subunit</fullName>
        <shortName evidence="1">RFC small subunit</shortName>
    </recommendedName>
    <alternativeName>
        <fullName evidence="1">Clamp loader small subunit</fullName>
    </alternativeName>
</protein>
<keyword id="KW-0067">ATP-binding</keyword>
<keyword id="KW-0235">DNA replication</keyword>
<keyword id="KW-0547">Nucleotide-binding</keyword>
<keyword id="KW-1185">Reference proteome</keyword>
<feature type="chain" id="PRO_0000245640" description="Replication factor C small subunit">
    <location>
        <begin position="1"/>
        <end position="321"/>
    </location>
</feature>
<feature type="binding site" evidence="1">
    <location>
        <begin position="43"/>
        <end position="50"/>
    </location>
    <ligand>
        <name>ATP</name>
        <dbReference type="ChEBI" id="CHEBI:30616"/>
    </ligand>
</feature>
<reference key="1">
    <citation type="journal article" date="2006" name="J. Bacteriol.">
        <title>The genome sequence of Methanosphaera stadtmanae reveals why this human intestinal archaeon is restricted to methanol and H2 for methane formation and ATP synthesis.</title>
        <authorList>
            <person name="Fricke W.F."/>
            <person name="Seedorf H."/>
            <person name="Henne A."/>
            <person name="Kruer M."/>
            <person name="Liesegang H."/>
            <person name="Hedderich R."/>
            <person name="Gottschalk G."/>
            <person name="Thauer R.K."/>
        </authorList>
    </citation>
    <scope>NUCLEOTIDE SEQUENCE [LARGE SCALE GENOMIC DNA]</scope>
    <source>
        <strain>ATCC 43021 / DSM 3091 / JCM 11832 / MCB-3</strain>
    </source>
</reference>
<evidence type="ECO:0000255" key="1">
    <source>
        <dbReference type="HAMAP-Rule" id="MF_01509"/>
    </source>
</evidence>
<dbReference type="EMBL" id="CP000102">
    <property type="protein sequence ID" value="ABC56814.1"/>
    <property type="molecule type" value="Genomic_DNA"/>
</dbReference>
<dbReference type="RefSeq" id="WP_011406014.1">
    <property type="nucleotide sequence ID" value="NC_007681.1"/>
</dbReference>
<dbReference type="SMR" id="Q2NH89"/>
<dbReference type="STRING" id="339860.Msp_0413"/>
<dbReference type="KEGG" id="mst:Msp_0413"/>
<dbReference type="eggNOG" id="arCOG00469">
    <property type="taxonomic scope" value="Archaea"/>
</dbReference>
<dbReference type="HOGENOM" id="CLU_042324_2_0_2"/>
<dbReference type="OrthoDB" id="7928at2157"/>
<dbReference type="Proteomes" id="UP000001931">
    <property type="component" value="Chromosome"/>
</dbReference>
<dbReference type="GO" id="GO:0005663">
    <property type="term" value="C:DNA replication factor C complex"/>
    <property type="evidence" value="ECO:0007669"/>
    <property type="project" value="InterPro"/>
</dbReference>
<dbReference type="GO" id="GO:0005524">
    <property type="term" value="F:ATP binding"/>
    <property type="evidence" value="ECO:0007669"/>
    <property type="project" value="UniProtKB-UniRule"/>
</dbReference>
<dbReference type="GO" id="GO:0016887">
    <property type="term" value="F:ATP hydrolysis activity"/>
    <property type="evidence" value="ECO:0007669"/>
    <property type="project" value="InterPro"/>
</dbReference>
<dbReference type="GO" id="GO:0003677">
    <property type="term" value="F:DNA binding"/>
    <property type="evidence" value="ECO:0007669"/>
    <property type="project" value="InterPro"/>
</dbReference>
<dbReference type="GO" id="GO:0003689">
    <property type="term" value="F:DNA clamp loader activity"/>
    <property type="evidence" value="ECO:0007669"/>
    <property type="project" value="UniProtKB-UniRule"/>
</dbReference>
<dbReference type="GO" id="GO:0006281">
    <property type="term" value="P:DNA repair"/>
    <property type="evidence" value="ECO:0007669"/>
    <property type="project" value="TreeGrafter"/>
</dbReference>
<dbReference type="GO" id="GO:0006261">
    <property type="term" value="P:DNA-templated DNA replication"/>
    <property type="evidence" value="ECO:0007669"/>
    <property type="project" value="TreeGrafter"/>
</dbReference>
<dbReference type="CDD" id="cd00009">
    <property type="entry name" value="AAA"/>
    <property type="match status" value="1"/>
</dbReference>
<dbReference type="CDD" id="cd18140">
    <property type="entry name" value="HLD_clamp_RFC"/>
    <property type="match status" value="1"/>
</dbReference>
<dbReference type="FunFam" id="1.20.272.10:FF:000029">
    <property type="entry name" value="Replication factor C small subunit"/>
    <property type="match status" value="1"/>
</dbReference>
<dbReference type="FunFam" id="3.40.50.300:FF:000952">
    <property type="entry name" value="Replication factor C subunit 2"/>
    <property type="match status" value="1"/>
</dbReference>
<dbReference type="Gene3D" id="1.10.8.60">
    <property type="match status" value="1"/>
</dbReference>
<dbReference type="Gene3D" id="1.20.272.10">
    <property type="match status" value="1"/>
</dbReference>
<dbReference type="Gene3D" id="3.40.50.300">
    <property type="entry name" value="P-loop containing nucleotide triphosphate hydrolases"/>
    <property type="match status" value="1"/>
</dbReference>
<dbReference type="HAMAP" id="MF_01509">
    <property type="entry name" value="RfcS"/>
    <property type="match status" value="1"/>
</dbReference>
<dbReference type="InterPro" id="IPR003593">
    <property type="entry name" value="AAA+_ATPase"/>
</dbReference>
<dbReference type="InterPro" id="IPR003959">
    <property type="entry name" value="ATPase_AAA_core"/>
</dbReference>
<dbReference type="InterPro" id="IPR008921">
    <property type="entry name" value="DNA_pol3_clamp-load_cplx_C"/>
</dbReference>
<dbReference type="InterPro" id="IPR050238">
    <property type="entry name" value="DNA_Rep/Repair_Clamp_Loader"/>
</dbReference>
<dbReference type="InterPro" id="IPR027417">
    <property type="entry name" value="P-loop_NTPase"/>
</dbReference>
<dbReference type="InterPro" id="IPR023748">
    <property type="entry name" value="Rep_factor-C_ssu_arc"/>
</dbReference>
<dbReference type="InterPro" id="IPR013748">
    <property type="entry name" value="Rep_factorC_C"/>
</dbReference>
<dbReference type="InterPro" id="IPR047854">
    <property type="entry name" value="RFC_lid"/>
</dbReference>
<dbReference type="NCBIfam" id="NF001679">
    <property type="entry name" value="PRK00440.1"/>
    <property type="match status" value="1"/>
</dbReference>
<dbReference type="PANTHER" id="PTHR11669">
    <property type="entry name" value="REPLICATION FACTOR C / DNA POLYMERASE III GAMMA-TAU SUBUNIT"/>
    <property type="match status" value="1"/>
</dbReference>
<dbReference type="PANTHER" id="PTHR11669:SF20">
    <property type="entry name" value="REPLICATION FACTOR C SUBUNIT 4"/>
    <property type="match status" value="1"/>
</dbReference>
<dbReference type="Pfam" id="PF00004">
    <property type="entry name" value="AAA"/>
    <property type="match status" value="1"/>
</dbReference>
<dbReference type="Pfam" id="PF21960">
    <property type="entry name" value="RCF1-5-like_lid"/>
    <property type="match status" value="1"/>
</dbReference>
<dbReference type="Pfam" id="PF08542">
    <property type="entry name" value="Rep_fac_C"/>
    <property type="match status" value="1"/>
</dbReference>
<dbReference type="SMART" id="SM00382">
    <property type="entry name" value="AAA"/>
    <property type="match status" value="1"/>
</dbReference>
<dbReference type="SUPFAM" id="SSF52540">
    <property type="entry name" value="P-loop containing nucleoside triphosphate hydrolases"/>
    <property type="match status" value="1"/>
</dbReference>
<dbReference type="SUPFAM" id="SSF48019">
    <property type="entry name" value="post-AAA+ oligomerization domain-like"/>
    <property type="match status" value="1"/>
</dbReference>
<proteinExistence type="inferred from homology"/>
<accession>Q2NH89</accession>
<sequence length="321" mass="36751">MKTPWVEKYRPQTLDDVVGQEQIVGRLKRYVEEKSLPNIMFTGFAGVGKTTCALALAKSLLGEYWQQNFLELNASDARGIDTVRNEIKSFCKLKAVGAPFRIIFLDEVDNMTKDAQQALRREMEMYTKTSSFILSCNYSSKIIDPIQSRCAIFRFSPIKAANIIKRLKYIASEEGIEAEQSALENIVYFTQGDMRKSINILQASTTTENTVTEEAVYDVISRAKPKDVRKIINKALNHDFMEARDLLRDIMIIEGVSGDDLITQFYQEVAQMTQEELIPEVEFIKLMEYMSECDYRIREGSNPRLQLEALLSKFLLVKQDA</sequence>
<gene>
    <name evidence="1" type="primary">rfcS</name>
    <name type="ordered locus">Msp_0413</name>
</gene>